<keyword id="KW-0472">Membrane</keyword>
<keyword id="KW-1185">Reference proteome</keyword>
<keyword id="KW-0812">Transmembrane</keyword>
<keyword id="KW-1133">Transmembrane helix</keyword>
<gene>
    <name type="ORF">SPAC212.01c</name>
</gene>
<comment type="subcellular location">
    <subcellularLocation>
        <location evidence="1">Membrane</location>
        <topology evidence="1">Multi-pass membrane protein</topology>
    </subcellularLocation>
</comment>
<comment type="similarity">
    <text evidence="2">Belongs to the UPF0494 family.</text>
</comment>
<organism>
    <name type="scientific">Schizosaccharomyces pombe (strain 972 / ATCC 24843)</name>
    <name type="common">Fission yeast</name>
    <dbReference type="NCBI Taxonomy" id="284812"/>
    <lineage>
        <taxon>Eukaryota</taxon>
        <taxon>Fungi</taxon>
        <taxon>Dikarya</taxon>
        <taxon>Ascomycota</taxon>
        <taxon>Taphrinomycotina</taxon>
        <taxon>Schizosaccharomycetes</taxon>
        <taxon>Schizosaccharomycetales</taxon>
        <taxon>Schizosaccharomycetaceae</taxon>
        <taxon>Schizosaccharomyces</taxon>
    </lineage>
</organism>
<protein>
    <recommendedName>
        <fullName>UPF0494 membrane protein SPAC212.01c</fullName>
    </recommendedName>
</protein>
<name>YM01_SCHPO</name>
<reference key="1">
    <citation type="journal article" date="2002" name="Nature">
        <title>The genome sequence of Schizosaccharomyces pombe.</title>
        <authorList>
            <person name="Wood V."/>
            <person name="Gwilliam R."/>
            <person name="Rajandream M.A."/>
            <person name="Lyne M.H."/>
            <person name="Lyne R."/>
            <person name="Stewart A."/>
            <person name="Sgouros J.G."/>
            <person name="Peat N."/>
            <person name="Hayles J."/>
            <person name="Baker S.G."/>
            <person name="Basham D."/>
            <person name="Bowman S."/>
            <person name="Brooks K."/>
            <person name="Brown D."/>
            <person name="Brown S."/>
            <person name="Chillingworth T."/>
            <person name="Churcher C.M."/>
            <person name="Collins M."/>
            <person name="Connor R."/>
            <person name="Cronin A."/>
            <person name="Davis P."/>
            <person name="Feltwell T."/>
            <person name="Fraser A."/>
            <person name="Gentles S."/>
            <person name="Goble A."/>
            <person name="Hamlin N."/>
            <person name="Harris D.E."/>
            <person name="Hidalgo J."/>
            <person name="Hodgson G."/>
            <person name="Holroyd S."/>
            <person name="Hornsby T."/>
            <person name="Howarth S."/>
            <person name="Huckle E.J."/>
            <person name="Hunt S."/>
            <person name="Jagels K."/>
            <person name="James K.D."/>
            <person name="Jones L."/>
            <person name="Jones M."/>
            <person name="Leather S."/>
            <person name="McDonald S."/>
            <person name="McLean J."/>
            <person name="Mooney P."/>
            <person name="Moule S."/>
            <person name="Mungall K.L."/>
            <person name="Murphy L.D."/>
            <person name="Niblett D."/>
            <person name="Odell C."/>
            <person name="Oliver K."/>
            <person name="O'Neil S."/>
            <person name="Pearson D."/>
            <person name="Quail M.A."/>
            <person name="Rabbinowitsch E."/>
            <person name="Rutherford K.M."/>
            <person name="Rutter S."/>
            <person name="Saunders D."/>
            <person name="Seeger K."/>
            <person name="Sharp S."/>
            <person name="Skelton J."/>
            <person name="Simmonds M.N."/>
            <person name="Squares R."/>
            <person name="Squares S."/>
            <person name="Stevens K."/>
            <person name="Taylor K."/>
            <person name="Taylor R.G."/>
            <person name="Tivey A."/>
            <person name="Walsh S.V."/>
            <person name="Warren T."/>
            <person name="Whitehead S."/>
            <person name="Woodward J.R."/>
            <person name="Volckaert G."/>
            <person name="Aert R."/>
            <person name="Robben J."/>
            <person name="Grymonprez B."/>
            <person name="Weltjens I."/>
            <person name="Vanstreels E."/>
            <person name="Rieger M."/>
            <person name="Schaefer M."/>
            <person name="Mueller-Auer S."/>
            <person name="Gabel C."/>
            <person name="Fuchs M."/>
            <person name="Duesterhoeft A."/>
            <person name="Fritzc C."/>
            <person name="Holzer E."/>
            <person name="Moestl D."/>
            <person name="Hilbert H."/>
            <person name="Borzym K."/>
            <person name="Langer I."/>
            <person name="Beck A."/>
            <person name="Lehrach H."/>
            <person name="Reinhardt R."/>
            <person name="Pohl T.M."/>
            <person name="Eger P."/>
            <person name="Zimmermann W."/>
            <person name="Wedler H."/>
            <person name="Wambutt R."/>
            <person name="Purnelle B."/>
            <person name="Goffeau A."/>
            <person name="Cadieu E."/>
            <person name="Dreano S."/>
            <person name="Gloux S."/>
            <person name="Lelaure V."/>
            <person name="Mottier S."/>
            <person name="Galibert F."/>
            <person name="Aves S.J."/>
            <person name="Xiang Z."/>
            <person name="Hunt C."/>
            <person name="Moore K."/>
            <person name="Hurst S.M."/>
            <person name="Lucas M."/>
            <person name="Rochet M."/>
            <person name="Gaillardin C."/>
            <person name="Tallada V.A."/>
            <person name="Garzon A."/>
            <person name="Thode G."/>
            <person name="Daga R.R."/>
            <person name="Cruzado L."/>
            <person name="Jimenez J."/>
            <person name="Sanchez M."/>
            <person name="del Rey F."/>
            <person name="Benito J."/>
            <person name="Dominguez A."/>
            <person name="Revuelta J.L."/>
            <person name="Moreno S."/>
            <person name="Armstrong J."/>
            <person name="Forsburg S.L."/>
            <person name="Cerutti L."/>
            <person name="Lowe T."/>
            <person name="McCombie W.R."/>
            <person name="Paulsen I."/>
            <person name="Potashkin J."/>
            <person name="Shpakovski G.V."/>
            <person name="Ussery D."/>
            <person name="Barrell B.G."/>
            <person name="Nurse P."/>
        </authorList>
    </citation>
    <scope>NUCLEOTIDE SEQUENCE [LARGE SCALE GENOMIC DNA]</scope>
    <source>
        <strain>972 / ATCC 24843</strain>
    </source>
</reference>
<evidence type="ECO:0000255" key="1"/>
<evidence type="ECO:0000305" key="2"/>
<feature type="chain" id="PRO_0000306283" description="UPF0494 membrane protein SPAC212.01c">
    <location>
        <begin position="1"/>
        <end position="280"/>
    </location>
</feature>
<feature type="transmembrane region" description="Helical" evidence="1">
    <location>
        <begin position="107"/>
        <end position="127"/>
    </location>
</feature>
<feature type="transmembrane region" description="Helical" evidence="1">
    <location>
        <begin position="144"/>
        <end position="164"/>
    </location>
</feature>
<feature type="transmembrane region" description="Helical" evidence="1">
    <location>
        <begin position="178"/>
        <end position="198"/>
    </location>
</feature>
<feature type="transmembrane region" description="Helical" evidence="1">
    <location>
        <begin position="199"/>
        <end position="219"/>
    </location>
</feature>
<proteinExistence type="inferred from homology"/>
<sequence length="280" mass="31590">MSNPESLKKQVEPPGYNELFMVEDVCNVDLEQGLDLCKPEKVNKQSQRSRQSRQSLFTNTIKPQKDKMNIKTNKIKEFLNDLFTEFSKFHNSYYPDGRISTRSNFRWPLLIIWSIIIVFAVDKKFEVQKFLSIWINENRFYSEIWVPIAIYVCLLVLMLLSLIFFAEFAVLALRVTGVIIAVLGAVLGMIIAVLGMIIAALGMIIAALGATITGLLYFGHWALYKLVILSLGFKIVTPGDVCVSNTLPTHNGETALHSETTVGSDIEQIELQNMPTPVKK</sequence>
<dbReference type="EMBL" id="CU329670">
    <property type="protein sequence ID" value="CAC05735.1"/>
    <property type="molecule type" value="Genomic_DNA"/>
</dbReference>
<dbReference type="RefSeq" id="NP_595035.1">
    <property type="nucleotide sequence ID" value="NM_001018173.2"/>
</dbReference>
<dbReference type="RefSeq" id="XP_001713157.1">
    <property type="nucleotide sequence ID" value="XM_001713105.2"/>
</dbReference>
<dbReference type="SMR" id="P0CT98"/>
<dbReference type="STRING" id="284812.P0CT98"/>
<dbReference type="PaxDb" id="4896-SPAC212.01c.1"/>
<dbReference type="EnsemblFungi" id="SPAC212.01c.1">
    <property type="protein sequence ID" value="SPAC212.01c.1:pep"/>
    <property type="gene ID" value="SPAC212.01c"/>
</dbReference>
<dbReference type="EnsemblFungi" id="SPBCPT2R1.04c.1">
    <property type="protein sequence ID" value="SPBCPT2R1.04c.1:pep"/>
    <property type="gene ID" value="SPBCPT2R1.04c"/>
</dbReference>
<dbReference type="KEGG" id="spo:2542040"/>
<dbReference type="PomBase" id="SPAC212.01c"/>
<dbReference type="VEuPathDB" id="FungiDB:SPAC212.01c"/>
<dbReference type="VEuPathDB" id="FungiDB:SPBCPT2R1.04c"/>
<dbReference type="InParanoid" id="P0CT98"/>
<dbReference type="OMA" id="LLMIWAT"/>
<dbReference type="PhylomeDB" id="P0CT98"/>
<dbReference type="PRO" id="PR:P0CT98"/>
<dbReference type="Proteomes" id="UP000002485">
    <property type="component" value="Chromosome I"/>
</dbReference>
<dbReference type="GO" id="GO:0009897">
    <property type="term" value="C:external side of plasma membrane"/>
    <property type="evidence" value="ECO:0000303"/>
    <property type="project" value="PomBase"/>
</dbReference>
<dbReference type="InterPro" id="IPR009340">
    <property type="entry name" value="DUF999"/>
</dbReference>
<dbReference type="Pfam" id="PF06198">
    <property type="entry name" value="DUF999"/>
    <property type="match status" value="1"/>
</dbReference>
<accession>P0CT98</accession>
<accession>Q9HGQ1</accession>